<gene>
    <name evidence="1" type="primary">azoR</name>
    <name type="ordered locus">RHOS4_37680</name>
    <name type="ordered locus">RSP_3728</name>
</gene>
<protein>
    <recommendedName>
        <fullName evidence="1">FMN-dependent NADH:quinone oxidoreductase</fullName>
        <ecNumber evidence="1">1.6.5.-</ecNumber>
    </recommendedName>
    <alternativeName>
        <fullName evidence="1">Azo-dye reductase</fullName>
    </alternativeName>
    <alternativeName>
        <fullName evidence="1">FMN-dependent NADH-azo compound oxidoreductase</fullName>
    </alternativeName>
    <alternativeName>
        <fullName evidence="1">FMN-dependent NADH-azoreductase</fullName>
        <ecNumber evidence="1">1.7.1.17</ecNumber>
    </alternativeName>
</protein>
<sequence>MTTILRIDSSIKGEAAVSRRLTQRILDRLLEAHPDATVVSRDLAQGIRQIDGPWLGSVFTAPEQRTADQQEIARTAGAVMAEVKEADILVIALPVYNFGAPAQLKSWVDHIARRGESFVYTETGPVGLLTGKRAIVAFTSDGTPLGSELDHASGWLRQVLGFVGITDVDFVAADRMVFGADEAMARAEAAVAALAA</sequence>
<comment type="function">
    <text evidence="1">Quinone reductase that provides resistance to thiol-specific stress caused by electrophilic quinones.</text>
</comment>
<comment type="function">
    <text evidence="1">Also exhibits azoreductase activity. Catalyzes the reductive cleavage of the azo bond in aromatic azo compounds to the corresponding amines.</text>
</comment>
<comment type="catalytic activity">
    <reaction evidence="1">
        <text>2 a quinone + NADH + H(+) = 2 a 1,4-benzosemiquinone + NAD(+)</text>
        <dbReference type="Rhea" id="RHEA:65952"/>
        <dbReference type="ChEBI" id="CHEBI:15378"/>
        <dbReference type="ChEBI" id="CHEBI:57540"/>
        <dbReference type="ChEBI" id="CHEBI:57945"/>
        <dbReference type="ChEBI" id="CHEBI:132124"/>
        <dbReference type="ChEBI" id="CHEBI:134225"/>
    </reaction>
</comment>
<comment type="catalytic activity">
    <reaction evidence="1">
        <text>N,N-dimethyl-1,4-phenylenediamine + anthranilate + 2 NAD(+) = 2-(4-dimethylaminophenyl)diazenylbenzoate + 2 NADH + 2 H(+)</text>
        <dbReference type="Rhea" id="RHEA:55872"/>
        <dbReference type="ChEBI" id="CHEBI:15378"/>
        <dbReference type="ChEBI" id="CHEBI:15783"/>
        <dbReference type="ChEBI" id="CHEBI:16567"/>
        <dbReference type="ChEBI" id="CHEBI:57540"/>
        <dbReference type="ChEBI" id="CHEBI:57945"/>
        <dbReference type="ChEBI" id="CHEBI:71579"/>
        <dbReference type="EC" id="1.7.1.17"/>
    </reaction>
</comment>
<comment type="cofactor">
    <cofactor evidence="1">
        <name>FMN</name>
        <dbReference type="ChEBI" id="CHEBI:58210"/>
    </cofactor>
    <text evidence="1">Binds 1 FMN per subunit.</text>
</comment>
<comment type="subunit">
    <text evidence="1">Homodimer.</text>
</comment>
<comment type="similarity">
    <text evidence="1">Belongs to the azoreductase type 1 family.</text>
</comment>
<dbReference type="EC" id="1.6.5.-" evidence="1"/>
<dbReference type="EC" id="1.7.1.17" evidence="1"/>
<dbReference type="EMBL" id="CP000144">
    <property type="protein sequence ID" value="ABA81336.1"/>
    <property type="molecule type" value="Genomic_DNA"/>
</dbReference>
<dbReference type="RefSeq" id="WP_011339565.1">
    <property type="nucleotide sequence ID" value="NC_007494.2"/>
</dbReference>
<dbReference type="RefSeq" id="YP_355237.1">
    <property type="nucleotide sequence ID" value="NC_007494.2"/>
</dbReference>
<dbReference type="SMR" id="Q3IVU8"/>
<dbReference type="STRING" id="272943.RSP_3728"/>
<dbReference type="EnsemblBacteria" id="ABA81336">
    <property type="protein sequence ID" value="ABA81336"/>
    <property type="gene ID" value="RSP_3728"/>
</dbReference>
<dbReference type="GeneID" id="3721489"/>
<dbReference type="KEGG" id="rsp:RSP_3728"/>
<dbReference type="PATRIC" id="fig|272943.9.peg.4169"/>
<dbReference type="eggNOG" id="COG1182">
    <property type="taxonomic scope" value="Bacteria"/>
</dbReference>
<dbReference type="OrthoDB" id="9787136at2"/>
<dbReference type="PhylomeDB" id="Q3IVU8"/>
<dbReference type="Proteomes" id="UP000002703">
    <property type="component" value="Chromosome 2"/>
</dbReference>
<dbReference type="GO" id="GO:0009055">
    <property type="term" value="F:electron transfer activity"/>
    <property type="evidence" value="ECO:0007669"/>
    <property type="project" value="UniProtKB-UniRule"/>
</dbReference>
<dbReference type="GO" id="GO:0010181">
    <property type="term" value="F:FMN binding"/>
    <property type="evidence" value="ECO:0007669"/>
    <property type="project" value="UniProtKB-UniRule"/>
</dbReference>
<dbReference type="GO" id="GO:0016652">
    <property type="term" value="F:oxidoreductase activity, acting on NAD(P)H as acceptor"/>
    <property type="evidence" value="ECO:0007669"/>
    <property type="project" value="UniProtKB-UniRule"/>
</dbReference>
<dbReference type="GO" id="GO:0016655">
    <property type="term" value="F:oxidoreductase activity, acting on NAD(P)H, quinone or similar compound as acceptor"/>
    <property type="evidence" value="ECO:0007669"/>
    <property type="project" value="InterPro"/>
</dbReference>
<dbReference type="Gene3D" id="3.40.50.360">
    <property type="match status" value="1"/>
</dbReference>
<dbReference type="HAMAP" id="MF_01216">
    <property type="entry name" value="Azoreductase_type1"/>
    <property type="match status" value="1"/>
</dbReference>
<dbReference type="InterPro" id="IPR003680">
    <property type="entry name" value="Flavodoxin_fold"/>
</dbReference>
<dbReference type="InterPro" id="IPR029039">
    <property type="entry name" value="Flavoprotein-like_sf"/>
</dbReference>
<dbReference type="InterPro" id="IPR050104">
    <property type="entry name" value="FMN-dep_NADH:Q_OxRdtase_AzoR1"/>
</dbReference>
<dbReference type="InterPro" id="IPR023048">
    <property type="entry name" value="NADH:quinone_OxRdtase_FMN_depd"/>
</dbReference>
<dbReference type="PANTHER" id="PTHR43741">
    <property type="entry name" value="FMN-DEPENDENT NADH-AZOREDUCTASE 1"/>
    <property type="match status" value="1"/>
</dbReference>
<dbReference type="PANTHER" id="PTHR43741:SF2">
    <property type="entry name" value="FMN-DEPENDENT NADH:QUINONE OXIDOREDUCTASE"/>
    <property type="match status" value="1"/>
</dbReference>
<dbReference type="Pfam" id="PF02525">
    <property type="entry name" value="Flavodoxin_2"/>
    <property type="match status" value="1"/>
</dbReference>
<dbReference type="SUPFAM" id="SSF52218">
    <property type="entry name" value="Flavoproteins"/>
    <property type="match status" value="1"/>
</dbReference>
<keyword id="KW-0285">Flavoprotein</keyword>
<keyword id="KW-0288">FMN</keyword>
<keyword id="KW-0520">NAD</keyword>
<keyword id="KW-0560">Oxidoreductase</keyword>
<keyword id="KW-1185">Reference proteome</keyword>
<evidence type="ECO:0000255" key="1">
    <source>
        <dbReference type="HAMAP-Rule" id="MF_01216"/>
    </source>
</evidence>
<organism>
    <name type="scientific">Cereibacter sphaeroides (strain ATCC 17023 / DSM 158 / JCM 6121 / CCUG 31486 / LMG 2827 / NBRC 12203 / NCIMB 8253 / ATH 2.4.1.)</name>
    <name type="common">Rhodobacter sphaeroides</name>
    <dbReference type="NCBI Taxonomy" id="272943"/>
    <lineage>
        <taxon>Bacteria</taxon>
        <taxon>Pseudomonadati</taxon>
        <taxon>Pseudomonadota</taxon>
        <taxon>Alphaproteobacteria</taxon>
        <taxon>Rhodobacterales</taxon>
        <taxon>Paracoccaceae</taxon>
        <taxon>Cereibacter</taxon>
    </lineage>
</organism>
<proteinExistence type="inferred from homology"/>
<name>AZOR_CERS4</name>
<feature type="chain" id="PRO_0000245963" description="FMN-dependent NADH:quinone oxidoreductase">
    <location>
        <begin position="1"/>
        <end position="196"/>
    </location>
</feature>
<feature type="binding site" evidence="1">
    <location>
        <position position="10"/>
    </location>
    <ligand>
        <name>FMN</name>
        <dbReference type="ChEBI" id="CHEBI:58210"/>
    </ligand>
</feature>
<reference key="1">
    <citation type="submission" date="2005-09" db="EMBL/GenBank/DDBJ databases">
        <title>Complete sequence of chromosome 2 of Rhodobacter sphaeroides 2.4.1.</title>
        <authorList>
            <person name="Copeland A."/>
            <person name="Lucas S."/>
            <person name="Lapidus A."/>
            <person name="Barry K."/>
            <person name="Detter J.C."/>
            <person name="Glavina T."/>
            <person name="Hammon N."/>
            <person name="Israni S."/>
            <person name="Pitluck S."/>
            <person name="Richardson P."/>
            <person name="Mackenzie C."/>
            <person name="Choudhary M."/>
            <person name="Larimer F."/>
            <person name="Hauser L.J."/>
            <person name="Land M."/>
            <person name="Donohue T.J."/>
            <person name="Kaplan S."/>
        </authorList>
    </citation>
    <scope>NUCLEOTIDE SEQUENCE [LARGE SCALE GENOMIC DNA]</scope>
    <source>
        <strain>ATCC 17023 / DSM 158 / JCM 6121 / CCUG 31486 / LMG 2827 / NBRC 12203 / NCIMB 8253 / ATH 2.4.1.</strain>
    </source>
</reference>
<accession>Q3IVU8</accession>